<sequence length="406" mass="46490">MPKKFTTRKGDIYTIDTPNEENLFKSVINKNTSEAFRYISQFNFPLSDNIKTIRYFAIDEDKPNNVGTSHSTLSLIAVINNDLETLNLLINFGFDINNHSGINYITPLGLAADKGYKEIVKLLCEQDDIKVQNALYYAIRGENKSIEIIDLLVQKGAIIKPEHIELAISHSNLSVFEYLFEKKLPDIEKNNLKLIGSSPAISSIDCILGEASKYQNTEVIKFLLSSGYKPEQKYIDEFFVSAADNGRLKTCITLKANIEEHTRLEGLSKYQNYLKDKYHDYYKTHIIFLSKFSYTDEPVEMFMFDNESNLLLLSMSRPLRSKLSSKDSYIIHDAIKEIFNNTHLNIKELELARFKARIEFIKITTDEDLVPLSNKLAPLFSPELIHDLSKLEEELFPEVKLAGLAD</sequence>
<name>Y266_RICFE</name>
<gene>
    <name type="ordered locus">RF_0266</name>
</gene>
<dbReference type="EMBL" id="CP000053">
    <property type="protein sequence ID" value="AAY61117.1"/>
    <property type="molecule type" value="Genomic_DNA"/>
</dbReference>
<dbReference type="SMR" id="Q4UMU1"/>
<dbReference type="STRING" id="315456.RF_0266"/>
<dbReference type="KEGG" id="rfe:RF_0266"/>
<dbReference type="HOGENOM" id="CLU_677708_0_0_5"/>
<dbReference type="OrthoDB" id="671583at2"/>
<dbReference type="Proteomes" id="UP000008548">
    <property type="component" value="Chromosome"/>
</dbReference>
<dbReference type="Gene3D" id="1.25.40.20">
    <property type="entry name" value="Ankyrin repeat-containing domain"/>
    <property type="match status" value="1"/>
</dbReference>
<dbReference type="InterPro" id="IPR002110">
    <property type="entry name" value="Ankyrin_rpt"/>
</dbReference>
<dbReference type="InterPro" id="IPR036770">
    <property type="entry name" value="Ankyrin_rpt-contain_sf"/>
</dbReference>
<dbReference type="InterPro" id="IPR051165">
    <property type="entry name" value="Multifunctional_ANK_Repeat"/>
</dbReference>
<dbReference type="PANTHER" id="PTHR24123">
    <property type="entry name" value="ANKYRIN REPEAT-CONTAINING"/>
    <property type="match status" value="1"/>
</dbReference>
<dbReference type="PANTHER" id="PTHR24123:SF33">
    <property type="entry name" value="PROTEIN HOS4"/>
    <property type="match status" value="1"/>
</dbReference>
<dbReference type="Pfam" id="PF12796">
    <property type="entry name" value="Ank_2"/>
    <property type="match status" value="1"/>
</dbReference>
<dbReference type="SMART" id="SM00248">
    <property type="entry name" value="ANK"/>
    <property type="match status" value="4"/>
</dbReference>
<dbReference type="SUPFAM" id="SSF48403">
    <property type="entry name" value="Ankyrin repeat"/>
    <property type="match status" value="1"/>
</dbReference>
<dbReference type="PROSITE" id="PS50297">
    <property type="entry name" value="ANK_REP_REGION"/>
    <property type="match status" value="1"/>
</dbReference>
<keyword id="KW-0040">ANK repeat</keyword>
<keyword id="KW-0677">Repeat</keyword>
<proteinExistence type="predicted"/>
<feature type="chain" id="PRO_0000281747" description="Putative ankyrin repeat protein RF_0266">
    <location>
        <begin position="1"/>
        <end position="406"/>
    </location>
</feature>
<feature type="repeat" description="ANK 1">
    <location>
        <begin position="68"/>
        <end position="98"/>
    </location>
</feature>
<feature type="repeat" description="ANK 2">
    <location>
        <begin position="103"/>
        <end position="129"/>
    </location>
</feature>
<feature type="repeat" description="ANK 3">
    <location>
        <begin position="130"/>
        <end position="161"/>
    </location>
</feature>
<feature type="repeat" description="ANK 4">
    <location>
        <begin position="163"/>
        <end position="189"/>
    </location>
</feature>
<feature type="repeat" description="ANK 5">
    <location>
        <begin position="203"/>
        <end position="232"/>
    </location>
</feature>
<protein>
    <recommendedName>
        <fullName>Putative ankyrin repeat protein RF_0266</fullName>
    </recommendedName>
</protein>
<accession>Q4UMU1</accession>
<organism>
    <name type="scientific">Rickettsia felis (strain ATCC VR-1525 / URRWXCal2)</name>
    <name type="common">Rickettsia azadi</name>
    <dbReference type="NCBI Taxonomy" id="315456"/>
    <lineage>
        <taxon>Bacteria</taxon>
        <taxon>Pseudomonadati</taxon>
        <taxon>Pseudomonadota</taxon>
        <taxon>Alphaproteobacteria</taxon>
        <taxon>Rickettsiales</taxon>
        <taxon>Rickettsiaceae</taxon>
        <taxon>Rickettsieae</taxon>
        <taxon>Rickettsia</taxon>
        <taxon>spotted fever group</taxon>
    </lineage>
</organism>
<reference key="1">
    <citation type="journal article" date="2005" name="PLoS Biol.">
        <title>The genome sequence of Rickettsia felis identifies the first putative conjugative plasmid in an obligate intracellular parasite.</title>
        <authorList>
            <person name="Ogata H."/>
            <person name="Renesto P."/>
            <person name="Audic S."/>
            <person name="Robert C."/>
            <person name="Blanc G."/>
            <person name="Fournier P.-E."/>
            <person name="Parinello H."/>
            <person name="Claverie J.-M."/>
            <person name="Raoult D."/>
        </authorList>
    </citation>
    <scope>NUCLEOTIDE SEQUENCE [LARGE SCALE GENOMIC DNA]</scope>
    <source>
        <strain>ATCC VR-1525 / URRWXCal2</strain>
    </source>
</reference>